<feature type="chain" id="PRO_0000344041" description="Ubiquitin carboxyl-terminal hydrolase MINDY-2">
    <location>
        <begin position="1"/>
        <end position="630"/>
    </location>
</feature>
<feature type="region of interest" description="Disordered" evidence="3">
    <location>
        <begin position="1"/>
        <end position="209"/>
    </location>
</feature>
<feature type="region of interest" description="Ubiquitin-binding domain (UBD)" evidence="2">
    <location>
        <begin position="508"/>
        <end position="560"/>
    </location>
</feature>
<feature type="region of interest" description="Disordered" evidence="3">
    <location>
        <begin position="564"/>
        <end position="630"/>
    </location>
</feature>
<feature type="compositionally biased region" description="Polar residues" evidence="3">
    <location>
        <begin position="24"/>
        <end position="33"/>
    </location>
</feature>
<feature type="compositionally biased region" description="Low complexity" evidence="3">
    <location>
        <begin position="141"/>
        <end position="163"/>
    </location>
</feature>
<feature type="compositionally biased region" description="Low complexity" evidence="3">
    <location>
        <begin position="170"/>
        <end position="191"/>
    </location>
</feature>
<feature type="compositionally biased region" description="Low complexity" evidence="3">
    <location>
        <begin position="564"/>
        <end position="599"/>
    </location>
</feature>
<feature type="compositionally biased region" description="Basic and acidic residues" evidence="3">
    <location>
        <begin position="606"/>
        <end position="630"/>
    </location>
</feature>
<feature type="active site" description="Nucleophile" evidence="1">
    <location>
        <position position="267"/>
    </location>
</feature>
<feature type="active site" description="Proton acceptor" evidence="1">
    <location>
        <position position="449"/>
    </location>
</feature>
<feature type="site" description="Ubiquitin-binding" evidence="1">
    <location>
        <position position="543"/>
    </location>
</feature>
<feature type="site" description="Ubiquitin-binding" evidence="1">
    <location>
        <begin position="546"/>
        <end position="547"/>
    </location>
</feature>
<feature type="site" description="Ubiquitin-binding" evidence="1">
    <location>
        <position position="550"/>
    </location>
</feature>
<feature type="modified residue" description="Phosphoserine" evidence="2">
    <location>
        <position position="94"/>
    </location>
</feature>
<reference key="1">
    <citation type="submission" date="2006-01" db="EMBL/GenBank/DDBJ databases">
        <authorList>
            <consortium name="NIH - Mammalian Gene Collection (MGC) project"/>
        </authorList>
    </citation>
    <scope>NUCLEOTIDE SEQUENCE [LARGE SCALE MRNA]</scope>
    <source>
        <strain>Hereford</strain>
        <tissue>Hypothalamus</tissue>
    </source>
</reference>
<name>MINY2_BOVIN</name>
<accession>Q2KI23</accession>
<comment type="function">
    <text evidence="2">Hydrolase that can remove 'Lys-48'-linked conjugated ubiquitin from proteins. Can also bind to polyubiquitin chains of different linkage types, including 'Lys-6', 'Lys-11', 'Lys-29', 'Lys-33' and 'Lys-63'. May play a regulatory role at the level of protein turnover.</text>
</comment>
<comment type="catalytic activity">
    <reaction evidence="2">
        <text>Thiol-dependent hydrolysis of ester, thioester, amide, peptide and isopeptide bonds formed by the C-terminal Gly of ubiquitin (a 76-residue protein attached to proteins as an intracellular targeting signal).</text>
        <dbReference type="EC" id="3.4.19.12"/>
    </reaction>
</comment>
<comment type="similarity">
    <text evidence="4">Belongs to the MINDY deubiquitinase family. FAM63 subfamily.</text>
</comment>
<proteinExistence type="evidence at transcript level"/>
<keyword id="KW-0378">Hydrolase</keyword>
<keyword id="KW-0597">Phosphoprotein</keyword>
<keyword id="KW-0645">Protease</keyword>
<keyword id="KW-1185">Reference proteome</keyword>
<keyword id="KW-0788">Thiol protease</keyword>
<keyword id="KW-0833">Ubl conjugation pathway</keyword>
<sequence length="630" mass="68118">MESGPESLQPLEHGVAAGPAPGTGSPQEGQQETRLAAGDGPGVWAAESSGGKGQGAAAGGRSLSDSASPAGSPQVLVPCSSLPRLDLKESDLESPAAQKEPVRGQHKVTASPETAEAGADHGLGPEGDGGARPDPAGTCQEESAAAGSSEPSSGGGLSSSCSDPSPPGESPSLDSLESFSNLHSFPSSSEFNSEEGAENRVPEEEEGAAVLPGAVPLCGEEEVEEEEAQVLAASKERFPGQSVYHIKWIQWKEENTPIITQNENGPCPLLAILNVLLLAWKVKLPPMMEIITAEQLMEYLGDYMLDTKPKEISEIQRLNYEQNMSDAMAVLHKLQTGLDVNVKFTGVRVFEYTPECIVFDLLDIPLYHGWLVDPQIDDIVKAVGNCSYNQLVEKIISCKQSENSELVSEGFVAEQFLNNTATQLTYHGLCELTSTVQEGELCVFFRNNHFSTMTKYKGLLYLLVTDQGFLTEEKVVWESLHNVDGDGNFCDSEFHLRPPSDPETVYRGQQDQIDQDYLMALSLQQEQQSQEINWEQIPEGISDLELAKKLQEEEDRRASQYYQEQEQAAAAAASASASASASASTQAPQSQPVQASPSSGRQSGNSERKRKEPREKDKEKEKEKNSCVIL</sequence>
<gene>
    <name type="primary">MINDY2</name>
    <name type="synonym">FAM63B</name>
</gene>
<dbReference type="EC" id="3.4.19.12"/>
<dbReference type="EMBL" id="BC112797">
    <property type="protein sequence ID" value="AAI12798.1"/>
    <property type="molecule type" value="mRNA"/>
</dbReference>
<dbReference type="RefSeq" id="NP_001039740.1">
    <property type="nucleotide sequence ID" value="NM_001046275.2"/>
</dbReference>
<dbReference type="SMR" id="Q2KI23"/>
<dbReference type="FunCoup" id="Q2KI23">
    <property type="interactions" value="1320"/>
</dbReference>
<dbReference type="STRING" id="9913.ENSBTAP00000016444"/>
<dbReference type="PaxDb" id="9913-ENSBTAP00000016444"/>
<dbReference type="GeneID" id="524749"/>
<dbReference type="KEGG" id="bta:524749"/>
<dbReference type="CTD" id="54629"/>
<dbReference type="VEuPathDB" id="HostDB:ENSBTAG00000012391"/>
<dbReference type="eggNOG" id="KOG2427">
    <property type="taxonomic scope" value="Eukaryota"/>
</dbReference>
<dbReference type="HOGENOM" id="CLU_022566_3_1_1"/>
<dbReference type="InParanoid" id="Q2KI23"/>
<dbReference type="OMA" id="WKTENTP"/>
<dbReference type="OrthoDB" id="10261212at2759"/>
<dbReference type="TreeFam" id="TF314589"/>
<dbReference type="Proteomes" id="UP000009136">
    <property type="component" value="Chromosome 10"/>
</dbReference>
<dbReference type="Bgee" id="ENSBTAG00000012391">
    <property type="expression patterns" value="Expressed in conceptus and 110 other cell types or tissues"/>
</dbReference>
<dbReference type="GO" id="GO:0016807">
    <property type="term" value="F:cysteine-type carboxypeptidase activity"/>
    <property type="evidence" value="ECO:0000318"/>
    <property type="project" value="GO_Central"/>
</dbReference>
<dbReference type="GO" id="GO:0004843">
    <property type="term" value="F:cysteine-type deubiquitinase activity"/>
    <property type="evidence" value="ECO:0007669"/>
    <property type="project" value="UniProtKB-EC"/>
</dbReference>
<dbReference type="GO" id="GO:0071795">
    <property type="term" value="F:K11-linked polyubiquitin modification-dependent protein binding"/>
    <property type="evidence" value="ECO:0000250"/>
    <property type="project" value="UniProtKB"/>
</dbReference>
<dbReference type="GO" id="GO:1990380">
    <property type="term" value="F:K48-linked deubiquitinase activity"/>
    <property type="evidence" value="ECO:0000318"/>
    <property type="project" value="GO_Central"/>
</dbReference>
<dbReference type="GO" id="GO:0036435">
    <property type="term" value="F:K48-linked polyubiquitin modification-dependent protein binding"/>
    <property type="evidence" value="ECO:0000250"/>
    <property type="project" value="UniProtKB"/>
</dbReference>
<dbReference type="GO" id="GO:0071796">
    <property type="term" value="F:K6-linked polyubiquitin modification-dependent protein binding"/>
    <property type="evidence" value="ECO:0000250"/>
    <property type="project" value="UniProtKB"/>
</dbReference>
<dbReference type="GO" id="GO:0070530">
    <property type="term" value="F:K63-linked polyubiquitin modification-dependent protein binding"/>
    <property type="evidence" value="ECO:0000250"/>
    <property type="project" value="UniProtKB"/>
</dbReference>
<dbReference type="GO" id="GO:0006508">
    <property type="term" value="P:proteolysis"/>
    <property type="evidence" value="ECO:0007669"/>
    <property type="project" value="UniProtKB-KW"/>
</dbReference>
<dbReference type="InterPro" id="IPR007518">
    <property type="entry name" value="MINDY"/>
</dbReference>
<dbReference type="InterPro" id="IPR033979">
    <property type="entry name" value="MINDY_domain"/>
</dbReference>
<dbReference type="PANTHER" id="PTHR18063">
    <property type="entry name" value="NF-E2 INDUCIBLE PROTEIN"/>
    <property type="match status" value="1"/>
</dbReference>
<dbReference type="PANTHER" id="PTHR18063:SF8">
    <property type="entry name" value="UBIQUITIN CARBOXYL-TERMINAL HYDROLASE MINDY-2"/>
    <property type="match status" value="1"/>
</dbReference>
<dbReference type="Pfam" id="PF04424">
    <property type="entry name" value="MINDY_DUB"/>
    <property type="match status" value="1"/>
</dbReference>
<evidence type="ECO:0000250" key="1">
    <source>
        <dbReference type="UniProtKB" id="Q8N5J2"/>
    </source>
</evidence>
<evidence type="ECO:0000250" key="2">
    <source>
        <dbReference type="UniProtKB" id="Q8NBR6"/>
    </source>
</evidence>
<evidence type="ECO:0000256" key="3">
    <source>
        <dbReference type="SAM" id="MobiDB-lite"/>
    </source>
</evidence>
<evidence type="ECO:0000305" key="4"/>
<organism>
    <name type="scientific">Bos taurus</name>
    <name type="common">Bovine</name>
    <dbReference type="NCBI Taxonomy" id="9913"/>
    <lineage>
        <taxon>Eukaryota</taxon>
        <taxon>Metazoa</taxon>
        <taxon>Chordata</taxon>
        <taxon>Craniata</taxon>
        <taxon>Vertebrata</taxon>
        <taxon>Euteleostomi</taxon>
        <taxon>Mammalia</taxon>
        <taxon>Eutheria</taxon>
        <taxon>Laurasiatheria</taxon>
        <taxon>Artiodactyla</taxon>
        <taxon>Ruminantia</taxon>
        <taxon>Pecora</taxon>
        <taxon>Bovidae</taxon>
        <taxon>Bovinae</taxon>
        <taxon>Bos</taxon>
    </lineage>
</organism>
<protein>
    <recommendedName>
        <fullName>Ubiquitin carboxyl-terminal hydrolase MINDY-2</fullName>
        <ecNumber>3.4.19.12</ecNumber>
    </recommendedName>
    <alternativeName>
        <fullName>Deubiquitinating enzyme MINDY-2</fullName>
    </alternativeName>
    <alternativeName>
        <fullName>Protein FAM63B</fullName>
    </alternativeName>
</protein>